<name>XYLA_BACVZ</name>
<gene>
    <name evidence="1" type="primary">xylA</name>
    <name type="ordered locus">RBAM_017350</name>
</gene>
<feature type="chain" id="PRO_1000026429" description="Xylose isomerase">
    <location>
        <begin position="1"/>
        <end position="445"/>
    </location>
</feature>
<feature type="active site" evidence="1">
    <location>
        <position position="107"/>
    </location>
</feature>
<feature type="active site" evidence="1">
    <location>
        <position position="110"/>
    </location>
</feature>
<feature type="binding site" evidence="1">
    <location>
        <position position="238"/>
    </location>
    <ligand>
        <name>Mg(2+)</name>
        <dbReference type="ChEBI" id="CHEBI:18420"/>
        <label>1</label>
    </ligand>
</feature>
<feature type="binding site" evidence="1">
    <location>
        <position position="274"/>
    </location>
    <ligand>
        <name>Mg(2+)</name>
        <dbReference type="ChEBI" id="CHEBI:18420"/>
        <label>1</label>
    </ligand>
</feature>
<feature type="binding site" evidence="1">
    <location>
        <position position="274"/>
    </location>
    <ligand>
        <name>Mg(2+)</name>
        <dbReference type="ChEBI" id="CHEBI:18420"/>
        <label>2</label>
    </ligand>
</feature>
<feature type="binding site" evidence="1">
    <location>
        <position position="277"/>
    </location>
    <ligand>
        <name>Mg(2+)</name>
        <dbReference type="ChEBI" id="CHEBI:18420"/>
        <label>2</label>
    </ligand>
</feature>
<feature type="binding site" evidence="1">
    <location>
        <position position="302"/>
    </location>
    <ligand>
        <name>Mg(2+)</name>
        <dbReference type="ChEBI" id="CHEBI:18420"/>
        <label>1</label>
    </ligand>
</feature>
<feature type="binding site" evidence="1">
    <location>
        <position position="313"/>
    </location>
    <ligand>
        <name>Mg(2+)</name>
        <dbReference type="ChEBI" id="CHEBI:18420"/>
        <label>2</label>
    </ligand>
</feature>
<feature type="binding site" evidence="1">
    <location>
        <position position="315"/>
    </location>
    <ligand>
        <name>Mg(2+)</name>
        <dbReference type="ChEBI" id="CHEBI:18420"/>
        <label>2</label>
    </ligand>
</feature>
<feature type="binding site" evidence="1">
    <location>
        <position position="345"/>
    </location>
    <ligand>
        <name>Mg(2+)</name>
        <dbReference type="ChEBI" id="CHEBI:18420"/>
        <label>1</label>
    </ligand>
</feature>
<organism>
    <name type="scientific">Bacillus velezensis (strain DSM 23117 / BGSC 10A6 / LMG 26770 / FZB42)</name>
    <name type="common">Bacillus amyloliquefaciens subsp. plantarum</name>
    <dbReference type="NCBI Taxonomy" id="326423"/>
    <lineage>
        <taxon>Bacteria</taxon>
        <taxon>Bacillati</taxon>
        <taxon>Bacillota</taxon>
        <taxon>Bacilli</taxon>
        <taxon>Bacillales</taxon>
        <taxon>Bacillaceae</taxon>
        <taxon>Bacillus</taxon>
        <taxon>Bacillus amyloliquefaciens group</taxon>
    </lineage>
</organism>
<proteinExistence type="inferred from homology"/>
<dbReference type="EC" id="5.3.1.5" evidence="1"/>
<dbReference type="EMBL" id="CP000560">
    <property type="protein sequence ID" value="ABS74098.1"/>
    <property type="molecule type" value="Genomic_DNA"/>
</dbReference>
<dbReference type="RefSeq" id="WP_012117621.1">
    <property type="nucleotide sequence ID" value="NC_009725.2"/>
</dbReference>
<dbReference type="SMR" id="A7Z522"/>
<dbReference type="GeneID" id="93080869"/>
<dbReference type="KEGG" id="bay:RBAM_017350"/>
<dbReference type="HOGENOM" id="CLU_037261_1_0_9"/>
<dbReference type="Proteomes" id="UP000001120">
    <property type="component" value="Chromosome"/>
</dbReference>
<dbReference type="GO" id="GO:0005737">
    <property type="term" value="C:cytoplasm"/>
    <property type="evidence" value="ECO:0007669"/>
    <property type="project" value="UniProtKB-SubCell"/>
</dbReference>
<dbReference type="GO" id="GO:0000287">
    <property type="term" value="F:magnesium ion binding"/>
    <property type="evidence" value="ECO:0007669"/>
    <property type="project" value="UniProtKB-UniRule"/>
</dbReference>
<dbReference type="GO" id="GO:0009045">
    <property type="term" value="F:xylose isomerase activity"/>
    <property type="evidence" value="ECO:0007669"/>
    <property type="project" value="UniProtKB-UniRule"/>
</dbReference>
<dbReference type="GO" id="GO:0042732">
    <property type="term" value="P:D-xylose metabolic process"/>
    <property type="evidence" value="ECO:0007669"/>
    <property type="project" value="UniProtKB-UniRule"/>
</dbReference>
<dbReference type="FunFam" id="3.20.20.150:FF:000002">
    <property type="entry name" value="Xylose isomerase"/>
    <property type="match status" value="1"/>
</dbReference>
<dbReference type="Gene3D" id="3.20.20.150">
    <property type="entry name" value="Divalent-metal-dependent TIM barrel enzymes"/>
    <property type="match status" value="1"/>
</dbReference>
<dbReference type="HAMAP" id="MF_00455">
    <property type="entry name" value="Xylose_isom_A"/>
    <property type="match status" value="1"/>
</dbReference>
<dbReference type="InterPro" id="IPR036237">
    <property type="entry name" value="Xyl_isomerase-like_sf"/>
</dbReference>
<dbReference type="InterPro" id="IPR013022">
    <property type="entry name" value="Xyl_isomerase-like_TIM-brl"/>
</dbReference>
<dbReference type="InterPro" id="IPR013452">
    <property type="entry name" value="Xylose_isom_bac"/>
</dbReference>
<dbReference type="InterPro" id="IPR001998">
    <property type="entry name" value="Xylose_isomerase"/>
</dbReference>
<dbReference type="NCBIfam" id="NF003998">
    <property type="entry name" value="PRK05474.1"/>
    <property type="match status" value="1"/>
</dbReference>
<dbReference type="NCBIfam" id="TIGR02630">
    <property type="entry name" value="xylose_isom_A"/>
    <property type="match status" value="1"/>
</dbReference>
<dbReference type="PANTHER" id="PTHR48408">
    <property type="match status" value="1"/>
</dbReference>
<dbReference type="PANTHER" id="PTHR48408:SF1">
    <property type="entry name" value="XYLOSE ISOMERASE"/>
    <property type="match status" value="1"/>
</dbReference>
<dbReference type="Pfam" id="PF01261">
    <property type="entry name" value="AP_endonuc_2"/>
    <property type="match status" value="1"/>
</dbReference>
<dbReference type="PRINTS" id="PR00688">
    <property type="entry name" value="XYLOSISMRASE"/>
</dbReference>
<dbReference type="SUPFAM" id="SSF51658">
    <property type="entry name" value="Xylose isomerase-like"/>
    <property type="match status" value="1"/>
</dbReference>
<dbReference type="PROSITE" id="PS51415">
    <property type="entry name" value="XYLOSE_ISOMERASE"/>
    <property type="match status" value="1"/>
</dbReference>
<protein>
    <recommendedName>
        <fullName evidence="1">Xylose isomerase</fullName>
        <ecNumber evidence="1">5.3.1.5</ecNumber>
    </recommendedName>
</protein>
<keyword id="KW-0119">Carbohydrate metabolism</keyword>
<keyword id="KW-0963">Cytoplasm</keyword>
<keyword id="KW-0413">Isomerase</keyword>
<keyword id="KW-0460">Magnesium</keyword>
<keyword id="KW-0479">Metal-binding</keyword>
<keyword id="KW-0859">Xylose metabolism</keyword>
<accession>A7Z522</accession>
<reference key="1">
    <citation type="journal article" date="2007" name="Nat. Biotechnol.">
        <title>Comparative analysis of the complete genome sequence of the plant growth-promoting bacterium Bacillus amyloliquefaciens FZB42.</title>
        <authorList>
            <person name="Chen X.H."/>
            <person name="Koumoutsi A."/>
            <person name="Scholz R."/>
            <person name="Eisenreich A."/>
            <person name="Schneider K."/>
            <person name="Heinemeyer I."/>
            <person name="Morgenstern B."/>
            <person name="Voss B."/>
            <person name="Hess W.R."/>
            <person name="Reva O."/>
            <person name="Junge H."/>
            <person name="Voigt B."/>
            <person name="Jungblut P.R."/>
            <person name="Vater J."/>
            <person name="Suessmuth R."/>
            <person name="Liesegang H."/>
            <person name="Strittmatter A."/>
            <person name="Gottschalk G."/>
            <person name="Borriss R."/>
        </authorList>
    </citation>
    <scope>NUCLEOTIDE SEQUENCE [LARGE SCALE GENOMIC DNA]</scope>
    <source>
        <strain>DSM 23117 / BGSC 10A6 / LMG 26770 / FZB42</strain>
    </source>
</reference>
<evidence type="ECO:0000255" key="1">
    <source>
        <dbReference type="HAMAP-Rule" id="MF_00455"/>
    </source>
</evidence>
<sequence>MAHSHSGSVNYFESANKVIYEGKESTNPLAFKYYNSQEVIGGKTMKEHLRFSIAYWHTFTADGTDIFGAATMQRPWDHYKGMDLARARVDAAFELFEKLDAPFFAFHDRDIAPEGSTLKETNQNLDLIVDMIKDYMRTSGVKLLWNTANMFTNPRFVHGAATSCNADVFAYAAAQVKKGLETAKELGAENYVFWGGREGYETLLNTDLKFELDNMARFMHMAVDYAKEIGYTGQFLIEPKPKEPTTHQYDTDAATTIAFLKQYGLDNHFKLNLEANHATLAGHTFEHELRMARVHGLLGSVDANQGDPLLGWDTDEFPTDLYSATLAMYEILKNGGLGSGGLNFDAKVRRSSFEPDDLLYAHVAGMDTFARGLKAARKLIEDRVFEDVIQHRYRSFTEGIGLEIAEGRADFKTLEQYALNNQPIKNESGRQERLKAILNQYILQV</sequence>
<comment type="catalytic activity">
    <reaction evidence="1">
        <text>alpha-D-xylose = alpha-D-xylulofuranose</text>
        <dbReference type="Rhea" id="RHEA:22816"/>
        <dbReference type="ChEBI" id="CHEBI:28518"/>
        <dbReference type="ChEBI" id="CHEBI:188998"/>
        <dbReference type="EC" id="5.3.1.5"/>
    </reaction>
</comment>
<comment type="cofactor">
    <cofactor evidence="1">
        <name>Mg(2+)</name>
        <dbReference type="ChEBI" id="CHEBI:18420"/>
    </cofactor>
    <text evidence="1">Binds 2 magnesium ions per subunit.</text>
</comment>
<comment type="subunit">
    <text evidence="1">Homotetramer.</text>
</comment>
<comment type="subcellular location">
    <subcellularLocation>
        <location evidence="1">Cytoplasm</location>
    </subcellularLocation>
</comment>
<comment type="similarity">
    <text evidence="1">Belongs to the xylose isomerase family.</text>
</comment>